<gene>
    <name type="primary">nusap1</name>
</gene>
<reference key="1">
    <citation type="submission" date="2005-03" db="EMBL/GenBank/DDBJ databases">
        <authorList>
            <consortium name="NIH - Xenopus Gene Collection (XGC) project"/>
        </authorList>
    </citation>
    <scope>NUCLEOTIDE SEQUENCE [LARGE SCALE MRNA]</scope>
    <source>
        <tissue>Testis</tissue>
    </source>
</reference>
<keyword id="KW-0131">Cell cycle</keyword>
<keyword id="KW-0132">Cell division</keyword>
<keyword id="KW-0963">Cytoplasm</keyword>
<keyword id="KW-0206">Cytoskeleton</keyword>
<keyword id="KW-0238">DNA-binding</keyword>
<keyword id="KW-0469">Meiosis</keyword>
<keyword id="KW-0493">Microtubule</keyword>
<keyword id="KW-0498">Mitosis</keyword>
<keyword id="KW-0539">Nucleus</keyword>
<keyword id="KW-1185">Reference proteome</keyword>
<name>NUSAP_XENTR</name>
<evidence type="ECO:0000250" key="1"/>
<evidence type="ECO:0000256" key="2">
    <source>
        <dbReference type="SAM" id="MobiDB-lite"/>
    </source>
</evidence>
<evidence type="ECO:0000305" key="3"/>
<feature type="chain" id="PRO_0000302041" description="Nucleolar and spindle-associated protein 1">
    <location>
        <begin position="1"/>
        <end position="500"/>
    </location>
</feature>
<feature type="region of interest" description="Disordered" evidence="2">
    <location>
        <begin position="48"/>
        <end position="204"/>
    </location>
</feature>
<feature type="region of interest" description="Disordered" evidence="2">
    <location>
        <begin position="241"/>
        <end position="299"/>
    </location>
</feature>
<feature type="region of interest" description="Disordered" evidence="2">
    <location>
        <begin position="319"/>
        <end position="353"/>
    </location>
</feature>
<feature type="region of interest" description="Disordered" evidence="2">
    <location>
        <begin position="365"/>
        <end position="500"/>
    </location>
</feature>
<feature type="compositionally biased region" description="Basic residues" evidence="2">
    <location>
        <begin position="82"/>
        <end position="92"/>
    </location>
</feature>
<feature type="compositionally biased region" description="Polar residues" evidence="2">
    <location>
        <begin position="113"/>
        <end position="127"/>
    </location>
</feature>
<feature type="compositionally biased region" description="Low complexity" evidence="2">
    <location>
        <begin position="264"/>
        <end position="274"/>
    </location>
</feature>
<feature type="compositionally biased region" description="Polar residues" evidence="2">
    <location>
        <begin position="276"/>
        <end position="298"/>
    </location>
</feature>
<feature type="compositionally biased region" description="Basic and acidic residues" evidence="2">
    <location>
        <begin position="323"/>
        <end position="332"/>
    </location>
</feature>
<feature type="compositionally biased region" description="Polar residues" evidence="2">
    <location>
        <begin position="380"/>
        <end position="392"/>
    </location>
</feature>
<feature type="compositionally biased region" description="Basic and acidic residues" evidence="2">
    <location>
        <begin position="442"/>
        <end position="451"/>
    </location>
</feature>
<feature type="compositionally biased region" description="Polar residues" evidence="2">
    <location>
        <begin position="452"/>
        <end position="469"/>
    </location>
</feature>
<feature type="sequence conflict" description="In Ref. 1; AAH91079." evidence="3" ref="1">
    <original>T</original>
    <variation>I</variation>
    <location>
        <position position="97"/>
    </location>
</feature>
<feature type="sequence conflict" description="In Ref. 1; AAH91079." evidence="3" ref="1">
    <original>T</original>
    <variation>I</variation>
    <location>
        <position position="152"/>
    </location>
</feature>
<feature type="sequence conflict" description="In Ref. 1; AAI22899." evidence="3" ref="1">
    <original>S</original>
    <variation>N</variation>
    <location>
        <position position="176"/>
    </location>
</feature>
<feature type="sequence conflict" description="In Ref. 1; AAH91079." evidence="3" ref="1">
    <original>M</original>
    <variation>L</variation>
    <location>
        <position position="285"/>
    </location>
</feature>
<protein>
    <recommendedName>
        <fullName>Nucleolar and spindle-associated protein 1</fullName>
        <shortName>NuSAP</shortName>
    </recommendedName>
</protein>
<dbReference type="EMBL" id="BC091079">
    <property type="protein sequence ID" value="AAH91079.1"/>
    <property type="status" value="ALT_INIT"/>
    <property type="molecule type" value="mRNA"/>
</dbReference>
<dbReference type="EMBL" id="BC122898">
    <property type="protein sequence ID" value="AAI22899.1"/>
    <property type="status" value="ALT_INIT"/>
    <property type="molecule type" value="mRNA"/>
</dbReference>
<dbReference type="SMR" id="Q5BKG8"/>
<dbReference type="FunCoup" id="Q5BKG8">
    <property type="interactions" value="827"/>
</dbReference>
<dbReference type="STRING" id="8364.ENSXETP00000053820"/>
<dbReference type="PaxDb" id="8364-ENSXETP00000057362"/>
<dbReference type="eggNOG" id="ENOG502QVI7">
    <property type="taxonomic scope" value="Eukaryota"/>
</dbReference>
<dbReference type="HOGENOM" id="CLU_050701_0_0_1"/>
<dbReference type="InParanoid" id="Q5BKG8"/>
<dbReference type="Proteomes" id="UP000008143">
    <property type="component" value="Unplaced"/>
</dbReference>
<dbReference type="GO" id="GO:0005737">
    <property type="term" value="C:cytoplasm"/>
    <property type="evidence" value="ECO:0007669"/>
    <property type="project" value="UniProtKB-SubCell"/>
</dbReference>
<dbReference type="GO" id="GO:0005874">
    <property type="term" value="C:microtubule"/>
    <property type="evidence" value="ECO:0007669"/>
    <property type="project" value="UniProtKB-KW"/>
</dbReference>
<dbReference type="GO" id="GO:0005634">
    <property type="term" value="C:nucleus"/>
    <property type="evidence" value="ECO:0007669"/>
    <property type="project" value="UniProtKB-SubCell"/>
</dbReference>
<dbReference type="GO" id="GO:0005819">
    <property type="term" value="C:spindle"/>
    <property type="evidence" value="ECO:0007669"/>
    <property type="project" value="UniProtKB-SubCell"/>
</dbReference>
<dbReference type="GO" id="GO:0003677">
    <property type="term" value="F:DNA binding"/>
    <property type="evidence" value="ECO:0007669"/>
    <property type="project" value="UniProtKB-KW"/>
</dbReference>
<dbReference type="GO" id="GO:0040001">
    <property type="term" value="P:establishment of mitotic spindle localization"/>
    <property type="evidence" value="ECO:0007669"/>
    <property type="project" value="InterPro"/>
</dbReference>
<dbReference type="GO" id="GO:0051321">
    <property type="term" value="P:meiotic cell cycle"/>
    <property type="evidence" value="ECO:0007669"/>
    <property type="project" value="UniProtKB-KW"/>
</dbReference>
<dbReference type="GO" id="GO:0000281">
    <property type="term" value="P:mitotic cytokinesis"/>
    <property type="evidence" value="ECO:0007669"/>
    <property type="project" value="InterPro"/>
</dbReference>
<dbReference type="InterPro" id="IPR026756">
    <property type="entry name" value="NuSAP"/>
</dbReference>
<dbReference type="PANTHER" id="PTHR15874">
    <property type="entry name" value="NUCLEOLAR AND SPINDLE-ASSOCIATED PROTEIN 1"/>
    <property type="match status" value="1"/>
</dbReference>
<dbReference type="PANTHER" id="PTHR15874:SF1">
    <property type="entry name" value="NUCLEOLAR AND SPINDLE-ASSOCIATED PROTEIN 1"/>
    <property type="match status" value="1"/>
</dbReference>
<dbReference type="Pfam" id="PF16006">
    <property type="entry name" value="NUSAP"/>
    <property type="match status" value="1"/>
</dbReference>
<organism>
    <name type="scientific">Xenopus tropicalis</name>
    <name type="common">Western clawed frog</name>
    <name type="synonym">Silurana tropicalis</name>
    <dbReference type="NCBI Taxonomy" id="8364"/>
    <lineage>
        <taxon>Eukaryota</taxon>
        <taxon>Metazoa</taxon>
        <taxon>Chordata</taxon>
        <taxon>Craniata</taxon>
        <taxon>Vertebrata</taxon>
        <taxon>Euteleostomi</taxon>
        <taxon>Amphibia</taxon>
        <taxon>Batrachia</taxon>
        <taxon>Anura</taxon>
        <taxon>Pipoidea</taxon>
        <taxon>Pipidae</taxon>
        <taxon>Xenopodinae</taxon>
        <taxon>Xenopus</taxon>
        <taxon>Silurana</taxon>
    </lineage>
</organism>
<accession>Q5BKG8</accession>
<accession>Q0IHZ1</accession>
<proteinExistence type="evidence at transcript level"/>
<comment type="function">
    <text evidence="1">Microtubule-associated protein with the capacity to bundle and stabilize microtubules. May associate with chromosomes and promote the organization of meiotic or mitotic spindle microtubules around them (By similarity).</text>
</comment>
<comment type="subunit">
    <text evidence="1">Interacts with DNA, microtubules, ipo7, kpna2 and kpnb1. Microtubule stabilization is inhibited by ipo7 and kpna2, while microtubule bundling is inhibited by kpnb1. Active GTP-bound ran causes dissociation of ipo7 and kpnb1 (By similarity).</text>
</comment>
<comment type="subcellular location">
    <subcellularLocation>
        <location evidence="1">Cytoplasm</location>
    </subcellularLocation>
    <subcellularLocation>
        <location evidence="1">Nucleus</location>
    </subcellularLocation>
    <subcellularLocation>
        <location evidence="1">Cytoplasm</location>
        <location evidence="1">Cytoskeleton</location>
        <location evidence="1">Spindle</location>
    </subcellularLocation>
    <text evidence="1">Associates with meiotic or mitotic spindle microtubules, particularly in the vicinity of chromosomes.</text>
</comment>
<comment type="similarity">
    <text evidence="3">Belongs to the NUSAP family.</text>
</comment>
<comment type="sequence caution" evidence="3">
    <conflict type="erroneous initiation">
        <sequence resource="EMBL-CDS" id="AAH91079"/>
    </conflict>
</comment>
<comment type="sequence caution" evidence="3">
    <conflict type="erroneous initiation">
        <sequence resource="EMBL-CDS" id="AAI22899"/>
    </conflict>
</comment>
<sequence length="500" mass="55838">MEAPTLSQLEGLRYSELQKLAKTAGLKANLKADKLLKVLKAHFYPESKNETLDSDGSSSLTDTDELNSSQEKEEPVSVSFVTHRRGRGRKPIRNQDTPKDEFLTVSAGVGTENMASSIDRTQQQNCTESKKEETTSPIIDNKHRKRSRSEDTSKQNNLESTGKTEKRQKKASNVTSVASTGKIPRLAGRLSKPGSKPSTPNFKKLHEAHFKKMESIDKYMERKQKRLDAVSSSIQEVKMLTKKSNLLKSVEKTPVSDIKKPVKSRLSLLSPLPRTTGASPSRTPMSQRRSCRSSTASKSILVDRSGFKPSVFSSSKMNVRFSEATKDNEHKRSLIKTPARKSSSFLAVTPESEPRRILPSVRKTELLPAPEKADKPDVNITLNTTTQPSPATGMSACKAITPFKFTAQNTETPNTKKKGKFDLQASLSRQLGYQPHKGKLKPWGESKENKPDPNSNVSVLKNNYKQPHLQTREDRRNQHVQNRKNKRDQALGTRRGVPVK</sequence>